<gene>
    <name evidence="1" type="primary">rapA</name>
    <name type="ordered locus">Pfl01_1255</name>
</gene>
<accession>Q3KGV8</accession>
<protein>
    <recommendedName>
        <fullName evidence="1">RNA polymerase-associated protein RapA</fullName>
        <ecNumber evidence="1">3.6.4.-</ecNumber>
    </recommendedName>
    <alternativeName>
        <fullName evidence="1">ATP-dependent helicase HepA</fullName>
    </alternativeName>
</protein>
<proteinExistence type="inferred from homology"/>
<dbReference type="EC" id="3.6.4.-" evidence="1"/>
<dbReference type="EMBL" id="CP000094">
    <property type="protein sequence ID" value="ABA72998.1"/>
    <property type="molecule type" value="Genomic_DNA"/>
</dbReference>
<dbReference type="RefSeq" id="WP_011332809.1">
    <property type="nucleotide sequence ID" value="NC_007492.2"/>
</dbReference>
<dbReference type="SMR" id="Q3KGV8"/>
<dbReference type="KEGG" id="pfo:Pfl01_1255"/>
<dbReference type="eggNOG" id="COG0553">
    <property type="taxonomic scope" value="Bacteria"/>
</dbReference>
<dbReference type="HOGENOM" id="CLU_011520_0_0_6"/>
<dbReference type="Proteomes" id="UP000002704">
    <property type="component" value="Chromosome"/>
</dbReference>
<dbReference type="GO" id="GO:0005524">
    <property type="term" value="F:ATP binding"/>
    <property type="evidence" value="ECO:0007669"/>
    <property type="project" value="UniProtKB-UniRule"/>
</dbReference>
<dbReference type="GO" id="GO:0003677">
    <property type="term" value="F:DNA binding"/>
    <property type="evidence" value="ECO:0007669"/>
    <property type="project" value="UniProtKB-KW"/>
</dbReference>
<dbReference type="GO" id="GO:0004386">
    <property type="term" value="F:helicase activity"/>
    <property type="evidence" value="ECO:0007669"/>
    <property type="project" value="UniProtKB-UniRule"/>
</dbReference>
<dbReference type="GO" id="GO:0016817">
    <property type="term" value="F:hydrolase activity, acting on acid anhydrides"/>
    <property type="evidence" value="ECO:0007669"/>
    <property type="project" value="InterPro"/>
</dbReference>
<dbReference type="GO" id="GO:0006355">
    <property type="term" value="P:regulation of DNA-templated transcription"/>
    <property type="evidence" value="ECO:0007669"/>
    <property type="project" value="UniProtKB-UniRule"/>
</dbReference>
<dbReference type="CDD" id="cd18011">
    <property type="entry name" value="DEXDc_RapA"/>
    <property type="match status" value="1"/>
</dbReference>
<dbReference type="CDD" id="cd18793">
    <property type="entry name" value="SF2_C_SNF"/>
    <property type="match status" value="1"/>
</dbReference>
<dbReference type="Gene3D" id="2.30.30.140">
    <property type="match status" value="1"/>
</dbReference>
<dbReference type="Gene3D" id="2.30.30.930">
    <property type="match status" value="1"/>
</dbReference>
<dbReference type="Gene3D" id="3.30.360.80">
    <property type="match status" value="1"/>
</dbReference>
<dbReference type="Gene3D" id="6.10.140.1500">
    <property type="match status" value="1"/>
</dbReference>
<dbReference type="Gene3D" id="6.10.140.2230">
    <property type="match status" value="1"/>
</dbReference>
<dbReference type="Gene3D" id="3.40.50.300">
    <property type="entry name" value="P-loop containing nucleotide triphosphate hydrolases"/>
    <property type="match status" value="1"/>
</dbReference>
<dbReference type="Gene3D" id="3.40.50.10810">
    <property type="entry name" value="Tandem AAA-ATPase domain"/>
    <property type="match status" value="1"/>
</dbReference>
<dbReference type="HAMAP" id="MF_01821">
    <property type="entry name" value="Helicase_RapA"/>
    <property type="match status" value="1"/>
</dbReference>
<dbReference type="InterPro" id="IPR014001">
    <property type="entry name" value="Helicase_ATP-bd"/>
</dbReference>
<dbReference type="InterPro" id="IPR001650">
    <property type="entry name" value="Helicase_C-like"/>
</dbReference>
<dbReference type="InterPro" id="IPR023949">
    <property type="entry name" value="Helicase_RapA"/>
</dbReference>
<dbReference type="InterPro" id="IPR027417">
    <property type="entry name" value="P-loop_NTPase"/>
</dbReference>
<dbReference type="InterPro" id="IPR022737">
    <property type="entry name" value="RapA_C"/>
</dbReference>
<dbReference type="InterPro" id="IPR038718">
    <property type="entry name" value="SNF2-like_sf"/>
</dbReference>
<dbReference type="InterPro" id="IPR049730">
    <property type="entry name" value="SNF2/RAD54-like_C"/>
</dbReference>
<dbReference type="InterPro" id="IPR000330">
    <property type="entry name" value="SNF2_N"/>
</dbReference>
<dbReference type="InterPro" id="IPR040765">
    <property type="entry name" value="Tudor_1_RapA"/>
</dbReference>
<dbReference type="InterPro" id="IPR040766">
    <property type="entry name" value="Tudor_2_RapA"/>
</dbReference>
<dbReference type="NCBIfam" id="NF003426">
    <property type="entry name" value="PRK04914.1"/>
    <property type="match status" value="1"/>
</dbReference>
<dbReference type="PANTHER" id="PTHR45766">
    <property type="entry name" value="DNA ANNEALING HELICASE AND ENDONUCLEASE ZRANB3 FAMILY MEMBER"/>
    <property type="match status" value="1"/>
</dbReference>
<dbReference type="PANTHER" id="PTHR45766:SF6">
    <property type="entry name" value="SWI_SNF-RELATED MATRIX-ASSOCIATED ACTIN-DEPENDENT REGULATOR OF CHROMATIN SUBFAMILY A-LIKE PROTEIN 1"/>
    <property type="match status" value="1"/>
</dbReference>
<dbReference type="Pfam" id="PF00271">
    <property type="entry name" value="Helicase_C"/>
    <property type="match status" value="1"/>
</dbReference>
<dbReference type="Pfam" id="PF12137">
    <property type="entry name" value="RapA_C"/>
    <property type="match status" value="1"/>
</dbReference>
<dbReference type="Pfam" id="PF00176">
    <property type="entry name" value="SNF2-rel_dom"/>
    <property type="match status" value="1"/>
</dbReference>
<dbReference type="Pfam" id="PF18339">
    <property type="entry name" value="Tudor_1_RapA"/>
    <property type="match status" value="1"/>
</dbReference>
<dbReference type="Pfam" id="PF18337">
    <property type="entry name" value="Tudor_RapA"/>
    <property type="match status" value="1"/>
</dbReference>
<dbReference type="SMART" id="SM00487">
    <property type="entry name" value="DEXDc"/>
    <property type="match status" value="1"/>
</dbReference>
<dbReference type="SMART" id="SM00490">
    <property type="entry name" value="HELICc"/>
    <property type="match status" value="1"/>
</dbReference>
<dbReference type="SUPFAM" id="SSF52540">
    <property type="entry name" value="P-loop containing nucleoside triphosphate hydrolases"/>
    <property type="match status" value="2"/>
</dbReference>
<dbReference type="PROSITE" id="PS51192">
    <property type="entry name" value="HELICASE_ATP_BIND_1"/>
    <property type="match status" value="1"/>
</dbReference>
<dbReference type="PROSITE" id="PS51194">
    <property type="entry name" value="HELICASE_CTER"/>
    <property type="match status" value="1"/>
</dbReference>
<keyword id="KW-0010">Activator</keyword>
<keyword id="KW-0067">ATP-binding</keyword>
<keyword id="KW-0238">DNA-binding</keyword>
<keyword id="KW-0347">Helicase</keyword>
<keyword id="KW-0378">Hydrolase</keyword>
<keyword id="KW-0547">Nucleotide-binding</keyword>
<keyword id="KW-0804">Transcription</keyword>
<keyword id="KW-0805">Transcription regulation</keyword>
<evidence type="ECO:0000255" key="1">
    <source>
        <dbReference type="HAMAP-Rule" id="MF_01821"/>
    </source>
</evidence>
<feature type="chain" id="PRO_1000088368" description="RNA polymerase-associated protein RapA">
    <location>
        <begin position="1"/>
        <end position="948"/>
    </location>
</feature>
<feature type="domain" description="Helicase ATP-binding" evidence="1">
    <location>
        <begin position="164"/>
        <end position="332"/>
    </location>
</feature>
<feature type="domain" description="Helicase C-terminal" evidence="1">
    <location>
        <begin position="473"/>
        <end position="627"/>
    </location>
</feature>
<feature type="short sequence motif" description="DEAH box">
    <location>
        <begin position="278"/>
        <end position="281"/>
    </location>
</feature>
<feature type="binding site" evidence="1">
    <location>
        <begin position="177"/>
        <end position="184"/>
    </location>
    <ligand>
        <name>ATP</name>
        <dbReference type="ChEBI" id="CHEBI:30616"/>
    </ligand>
</feature>
<comment type="function">
    <text evidence="1">Transcription regulator that activates transcription by stimulating RNA polymerase (RNAP) recycling in case of stress conditions such as supercoiled DNA or high salt concentrations. Probably acts by releasing the RNAP, when it is trapped or immobilized on tightly supercoiled DNA. Does not activate transcription on linear DNA. Probably not involved in DNA repair.</text>
</comment>
<comment type="subunit">
    <text evidence="1">Interacts with the RNAP. Has a higher affinity for the core RNAP than for the holoenzyme. Its ATPase activity is stimulated by binding to RNAP.</text>
</comment>
<comment type="similarity">
    <text evidence="1">Belongs to the SNF2/RAD54 helicase family. RapA subfamily.</text>
</comment>
<sequence>MAQQYQPGQRWISDSEAELGLGTVLAQDGRLLTVLYPATGETRQYALRNAPLTRVRFSPGDSITHFEGWKMTVQQVDDVDGLMVYHGLNAQNEAVTLPETQLSNFIQFRLASDRLFAGQIDPLAWFSLRYHTLEHTSRQLQSALWGLGGVRAQPIAHQLHIAREVADRIAPRVLLADEVGLGKTIEAGLVIHRQLLSGRANRVLILVPENLQHQWLVEMRRRFNLQVALFDEERFIESDATNPFEDTQLALVALEWLVDDEKAQDALFAAGWDLMVVDEAHHLVWHEDKVSPEYSLVEQLAEVIPGVLLLTATPEQLGQDSHFARLRLLDPNRFHDLAAFRAESENYRPVAEAVQELLDKGRLSPAAHKTIHGFLGNEGEALLTAVNDGDTEASARLVRELLDRHGTGRVLFRNTRAAVQGFPERKLHPYPLPCPDEYLELPLGEHAELYPEVSFQAQPDASEEERWWKFDPRVEWLIDQLKMLKRTKVLVICAHAETAMDLEDALRVRSGIPATVFHEGMNILERDRAAAYFADEEFGAQVLICSEIGSEGRNFQFAHHLVLFDLPSHPDLLEQRIGRLDRIGQKHIIELHVPYLETSPQERLFQWYHEALNAFLNTCPTGNALQHQFGPRLLPLLEEADDGEWQALIDEARTERERLEAELHTGRDRLLELNSGGAGEGEALVEAILEQDDQFALPIYMETLFDAFGIDSEDHSENALILKPSEKMLDASFPLGDDEGVTITYDRNQALSREDMQFITWEHPMVQGGMDLVLSGSMGNTAVALIKNKALKPGTVLLELLYVSEVVAPRSLQLGRYLPPAALRCLLDANGNDLSSRVAFETLNDQLESVPRASANKFIQAQRDQLTPRINAGEDKVTPRHAERVAEARRRLAADTDEELARLTALQAVNPTVRDSELDALRKQREQGLAMLDKAALRLEAIRVLVAG</sequence>
<reference key="1">
    <citation type="journal article" date="2009" name="Genome Biol.">
        <title>Genomic and genetic analyses of diversity and plant interactions of Pseudomonas fluorescens.</title>
        <authorList>
            <person name="Silby M.W."/>
            <person name="Cerdeno-Tarraga A.M."/>
            <person name="Vernikos G.S."/>
            <person name="Giddens S.R."/>
            <person name="Jackson R.W."/>
            <person name="Preston G.M."/>
            <person name="Zhang X.-X."/>
            <person name="Moon C.D."/>
            <person name="Gehrig S.M."/>
            <person name="Godfrey S.A.C."/>
            <person name="Knight C.G."/>
            <person name="Malone J.G."/>
            <person name="Robinson Z."/>
            <person name="Spiers A.J."/>
            <person name="Harris S."/>
            <person name="Challis G.L."/>
            <person name="Yaxley A.M."/>
            <person name="Harris D."/>
            <person name="Seeger K."/>
            <person name="Murphy L."/>
            <person name="Rutter S."/>
            <person name="Squares R."/>
            <person name="Quail M.A."/>
            <person name="Saunders E."/>
            <person name="Mavromatis K."/>
            <person name="Brettin T.S."/>
            <person name="Bentley S.D."/>
            <person name="Hothersall J."/>
            <person name="Stephens E."/>
            <person name="Thomas C.M."/>
            <person name="Parkhill J."/>
            <person name="Levy S.B."/>
            <person name="Rainey P.B."/>
            <person name="Thomson N.R."/>
        </authorList>
    </citation>
    <scope>NUCLEOTIDE SEQUENCE [LARGE SCALE GENOMIC DNA]</scope>
    <source>
        <strain>Pf0-1</strain>
    </source>
</reference>
<organism>
    <name type="scientific">Pseudomonas fluorescens (strain Pf0-1)</name>
    <dbReference type="NCBI Taxonomy" id="205922"/>
    <lineage>
        <taxon>Bacteria</taxon>
        <taxon>Pseudomonadati</taxon>
        <taxon>Pseudomonadota</taxon>
        <taxon>Gammaproteobacteria</taxon>
        <taxon>Pseudomonadales</taxon>
        <taxon>Pseudomonadaceae</taxon>
        <taxon>Pseudomonas</taxon>
    </lineage>
</organism>
<name>RAPA_PSEPF</name>